<name>CSPLJ_ARALL</name>
<feature type="chain" id="PRO_0000417759" description="CASP-like protein 4A2">
    <location>
        <begin position="1"/>
        <end position="297"/>
    </location>
</feature>
<feature type="topological domain" description="Cytoplasmic" evidence="2">
    <location>
        <begin position="1"/>
        <end position="149"/>
    </location>
</feature>
<feature type="transmembrane region" description="Helical" evidence="2">
    <location>
        <begin position="150"/>
        <end position="170"/>
    </location>
</feature>
<feature type="topological domain" description="Extracellular" evidence="2">
    <location>
        <begin position="171"/>
        <end position="189"/>
    </location>
</feature>
<feature type="transmembrane region" description="Helical" evidence="2">
    <location>
        <begin position="190"/>
        <end position="210"/>
    </location>
</feature>
<feature type="topological domain" description="Cytoplasmic" evidence="2">
    <location>
        <begin position="211"/>
        <end position="225"/>
    </location>
</feature>
<feature type="transmembrane region" description="Helical" evidence="2">
    <location>
        <begin position="226"/>
        <end position="246"/>
    </location>
</feature>
<feature type="topological domain" description="Extracellular" evidence="2">
    <location>
        <begin position="247"/>
        <end position="265"/>
    </location>
</feature>
<feature type="transmembrane region" description="Helical" evidence="2">
    <location>
        <begin position="266"/>
        <end position="286"/>
    </location>
</feature>
<feature type="topological domain" description="Cytoplasmic" evidence="2">
    <location>
        <begin position="287"/>
        <end position="297"/>
    </location>
</feature>
<feature type="region of interest" description="Disordered" evidence="3">
    <location>
        <begin position="1"/>
        <end position="136"/>
    </location>
</feature>
<feature type="compositionally biased region" description="Low complexity" evidence="3">
    <location>
        <begin position="8"/>
        <end position="19"/>
    </location>
</feature>
<feature type="compositionally biased region" description="Pro residues" evidence="3">
    <location>
        <begin position="69"/>
        <end position="83"/>
    </location>
</feature>
<feature type="compositionally biased region" description="Polar residues" evidence="3">
    <location>
        <begin position="93"/>
        <end position="121"/>
    </location>
</feature>
<proteinExistence type="inferred from homology"/>
<reference key="1">
    <citation type="journal article" date="2011" name="Nat. Genet.">
        <title>The Arabidopsis lyrata genome sequence and the basis of rapid genome size change.</title>
        <authorList>
            <person name="Hu T.T."/>
            <person name="Pattyn P."/>
            <person name="Bakker E.G."/>
            <person name="Cao J."/>
            <person name="Cheng J.-F."/>
            <person name="Clark R.M."/>
            <person name="Fahlgren N."/>
            <person name="Fawcett J.A."/>
            <person name="Grimwood J."/>
            <person name="Gundlach H."/>
            <person name="Haberer G."/>
            <person name="Hollister J.D."/>
            <person name="Ossowski S."/>
            <person name="Ottilar R.P."/>
            <person name="Salamov A.A."/>
            <person name="Schneeberger K."/>
            <person name="Spannagl M."/>
            <person name="Wang X."/>
            <person name="Yang L."/>
            <person name="Nasrallah M.E."/>
            <person name="Bergelson J."/>
            <person name="Carrington J.C."/>
            <person name="Gaut B.S."/>
            <person name="Schmutz J."/>
            <person name="Mayer K.F.X."/>
            <person name="Van de Peer Y."/>
            <person name="Grigoriev I.V."/>
            <person name="Nordborg M."/>
            <person name="Weigel D."/>
            <person name="Guo Y.-L."/>
        </authorList>
    </citation>
    <scope>NUCLEOTIDE SEQUENCE [LARGE SCALE GENOMIC DNA]</scope>
    <source>
        <strain>cv. MN47</strain>
    </source>
</reference>
<reference key="2">
    <citation type="journal article" date="2014" name="Plant Physiol.">
        <title>Functional and evolutionary analysis of the CASPARIAN STRIP MEMBRANE DOMAIN PROTEIN family.</title>
        <authorList>
            <person name="Roppolo D."/>
            <person name="Boeckmann B."/>
            <person name="Pfister A."/>
            <person name="Boutet E."/>
            <person name="Rubio M.C."/>
            <person name="Denervaud-Tendon V."/>
            <person name="Vermeer J.E."/>
            <person name="Gheyselinck J."/>
            <person name="Xenarios I."/>
            <person name="Geldner N."/>
        </authorList>
    </citation>
    <scope>GENE FAMILY</scope>
    <scope>NOMENCLATURE</scope>
</reference>
<evidence type="ECO:0000250" key="1"/>
<evidence type="ECO:0000255" key="2"/>
<evidence type="ECO:0000256" key="3">
    <source>
        <dbReference type="SAM" id="MobiDB-lite"/>
    </source>
</evidence>
<evidence type="ECO:0000305" key="4"/>
<keyword id="KW-1003">Cell membrane</keyword>
<keyword id="KW-0472">Membrane</keyword>
<keyword id="KW-1185">Reference proteome</keyword>
<keyword id="KW-0812">Transmembrane</keyword>
<keyword id="KW-1133">Transmembrane helix</keyword>
<gene>
    <name type="ORF">ARALYDRAFT_919556</name>
</gene>
<organism>
    <name type="scientific">Arabidopsis lyrata subsp. lyrata</name>
    <name type="common">Lyre-leaved rock-cress</name>
    <dbReference type="NCBI Taxonomy" id="81972"/>
    <lineage>
        <taxon>Eukaryota</taxon>
        <taxon>Viridiplantae</taxon>
        <taxon>Streptophyta</taxon>
        <taxon>Embryophyta</taxon>
        <taxon>Tracheophyta</taxon>
        <taxon>Spermatophyta</taxon>
        <taxon>Magnoliopsida</taxon>
        <taxon>eudicotyledons</taxon>
        <taxon>Gunneridae</taxon>
        <taxon>Pentapetalae</taxon>
        <taxon>rosids</taxon>
        <taxon>malvids</taxon>
        <taxon>Brassicales</taxon>
        <taxon>Brassicaceae</taxon>
        <taxon>Camelineae</taxon>
        <taxon>Arabidopsis</taxon>
    </lineage>
</organism>
<dbReference type="EMBL" id="GL348720">
    <property type="protein sequence ID" value="EFH42770.1"/>
    <property type="molecule type" value="Genomic_DNA"/>
</dbReference>
<dbReference type="SMR" id="D7MMW4"/>
<dbReference type="STRING" id="81972.D7MMW4"/>
<dbReference type="EnsemblPlants" id="scaffold_802956.1">
    <property type="protein sequence ID" value="scaffold_802956.1"/>
    <property type="gene ID" value="scaffold_802956.1"/>
</dbReference>
<dbReference type="Gramene" id="scaffold_802956.1">
    <property type="protein sequence ID" value="scaffold_802956.1"/>
    <property type="gene ID" value="scaffold_802956.1"/>
</dbReference>
<dbReference type="KEGG" id="aly:9300896"/>
<dbReference type="eggNOG" id="ENOG502QW75">
    <property type="taxonomic scope" value="Eukaryota"/>
</dbReference>
<dbReference type="HOGENOM" id="CLU_048961_2_0_1"/>
<dbReference type="OrthoDB" id="672180at2759"/>
<dbReference type="Proteomes" id="UP000008694">
    <property type="component" value="Unassembled WGS sequence"/>
</dbReference>
<dbReference type="GO" id="GO:0005886">
    <property type="term" value="C:plasma membrane"/>
    <property type="evidence" value="ECO:0007669"/>
    <property type="project" value="UniProtKB-SubCell"/>
</dbReference>
<dbReference type="InterPro" id="IPR006702">
    <property type="entry name" value="CASP_dom"/>
</dbReference>
<dbReference type="PANTHER" id="PTHR33573:SF61">
    <property type="entry name" value="CASP-LIKE PROTEIN 4A2"/>
    <property type="match status" value="1"/>
</dbReference>
<dbReference type="PANTHER" id="PTHR33573">
    <property type="entry name" value="CASP-LIKE PROTEIN 4A4"/>
    <property type="match status" value="1"/>
</dbReference>
<dbReference type="Pfam" id="PF04535">
    <property type="entry name" value="CASP_dom"/>
    <property type="match status" value="1"/>
</dbReference>
<protein>
    <recommendedName>
        <fullName>CASP-like protein 4A2</fullName>
        <shortName>AlCASPL4A2</shortName>
    </recommendedName>
</protein>
<accession>D7MMW4</accession>
<sequence length="297" mass="32766">MKMKRTVSSNSEAYSYNESPHSPLRFHSPLSDAGDLPESRYVSPEGSPFKIENPKSIVAGNKLTQFSPLPSPIPPPPPQIPPPRRQRNARVPMNSSLDKSPSSMVVQNSWVREDGQQNTTRKAGAPMNGEESATTAVNRARRDDLVSVTALGFRITEVILCVISFSIMAADKTQGWSGDSYDRYKEYRYCLAVNVIAFVYSAFEACDAACYMAKESYMMNCGFHDLFVFSMDQLLAYLLMSASSCAATRVDDWVSNWGKDEFTQMATASIAVSFLAFGAFAVSALISSYRLFTHASS</sequence>
<comment type="subunit">
    <text evidence="1">Homodimer and heterodimers.</text>
</comment>
<comment type="subcellular location">
    <subcellularLocation>
        <location evidence="1">Cell membrane</location>
        <topology evidence="1">Multi-pass membrane protein</topology>
    </subcellularLocation>
</comment>
<comment type="similarity">
    <text evidence="4">Belongs to the Casparian strip membrane proteins (CASP) family.</text>
</comment>